<keyword id="KW-0256">Endoplasmic reticulum</keyword>
<keyword id="KW-0378">Hydrolase</keyword>
<keyword id="KW-0442">Lipid degradation</keyword>
<keyword id="KW-0443">Lipid metabolism</keyword>
<keyword id="KW-0472">Membrane</keyword>
<keyword id="KW-0677">Repeat</keyword>
<keyword id="KW-0812">Transmembrane</keyword>
<keyword id="KW-1133">Transmembrane helix</keyword>
<gene>
    <name type="primary">NTE1</name>
    <name type="ordered locus">CNBD2140</name>
</gene>
<proteinExistence type="inferred from homology"/>
<reference key="1">
    <citation type="journal article" date="2005" name="Science">
        <title>The genome of the basidiomycetous yeast and human pathogen Cryptococcus neoformans.</title>
        <authorList>
            <person name="Loftus B.J."/>
            <person name="Fung E."/>
            <person name="Roncaglia P."/>
            <person name="Rowley D."/>
            <person name="Amedeo P."/>
            <person name="Bruno D."/>
            <person name="Vamathevan J."/>
            <person name="Miranda M."/>
            <person name="Anderson I.J."/>
            <person name="Fraser J.A."/>
            <person name="Allen J.E."/>
            <person name="Bosdet I.E."/>
            <person name="Brent M.R."/>
            <person name="Chiu R."/>
            <person name="Doering T.L."/>
            <person name="Donlin M.J."/>
            <person name="D'Souza C.A."/>
            <person name="Fox D.S."/>
            <person name="Grinberg V."/>
            <person name="Fu J."/>
            <person name="Fukushima M."/>
            <person name="Haas B.J."/>
            <person name="Huang J.C."/>
            <person name="Janbon G."/>
            <person name="Jones S.J.M."/>
            <person name="Koo H.L."/>
            <person name="Krzywinski M.I."/>
            <person name="Kwon-Chung K.J."/>
            <person name="Lengeler K.B."/>
            <person name="Maiti R."/>
            <person name="Marra M.A."/>
            <person name="Marra R.E."/>
            <person name="Mathewson C.A."/>
            <person name="Mitchell T.G."/>
            <person name="Pertea M."/>
            <person name="Riggs F.R."/>
            <person name="Salzberg S.L."/>
            <person name="Schein J.E."/>
            <person name="Shvartsbeyn A."/>
            <person name="Shin H."/>
            <person name="Shumway M."/>
            <person name="Specht C.A."/>
            <person name="Suh B.B."/>
            <person name="Tenney A."/>
            <person name="Utterback T.R."/>
            <person name="Wickes B.L."/>
            <person name="Wortman J.R."/>
            <person name="Wye N.H."/>
            <person name="Kronstad J.W."/>
            <person name="Lodge J.K."/>
            <person name="Heitman J."/>
            <person name="Davis R.W."/>
            <person name="Fraser C.M."/>
            <person name="Hyman R.W."/>
        </authorList>
    </citation>
    <scope>NUCLEOTIDE SEQUENCE [LARGE SCALE GENOMIC DNA]</scope>
    <source>
        <strain>B-3501A</strain>
    </source>
</reference>
<comment type="function">
    <text evidence="1">Intracellular phospholipase B that catalyzes the double deacylation of phosphatidylcholine (PC) to glycerophosphocholine (GroPCho). Plays an important role in membrane lipid homeostasis. Responsible for the rapid PC turnover in response to inositol, elevated temperatures, or when choline is present in the growth medium (By similarity).</text>
</comment>
<comment type="catalytic activity">
    <reaction>
        <text>a 1-acyl-sn-glycero-3-phosphocholine + H2O = sn-glycerol 3-phosphocholine + a fatty acid + H(+)</text>
        <dbReference type="Rhea" id="RHEA:15177"/>
        <dbReference type="ChEBI" id="CHEBI:15377"/>
        <dbReference type="ChEBI" id="CHEBI:15378"/>
        <dbReference type="ChEBI" id="CHEBI:16870"/>
        <dbReference type="ChEBI" id="CHEBI:28868"/>
        <dbReference type="ChEBI" id="CHEBI:58168"/>
        <dbReference type="EC" id="3.1.1.5"/>
    </reaction>
</comment>
<comment type="activity regulation">
    <text evidence="1">Inhibited by organophosphorus esters.</text>
</comment>
<comment type="subcellular location">
    <subcellularLocation>
        <location evidence="1">Endoplasmic reticulum membrane</location>
        <topology evidence="1">Multi-pass membrane protein</topology>
    </subcellularLocation>
</comment>
<comment type="similarity">
    <text evidence="5">Belongs to the NTE family.</text>
</comment>
<evidence type="ECO:0000250" key="1"/>
<evidence type="ECO:0000255" key="2"/>
<evidence type="ECO:0000255" key="3">
    <source>
        <dbReference type="PROSITE-ProRule" id="PRU01161"/>
    </source>
</evidence>
<evidence type="ECO:0000256" key="4">
    <source>
        <dbReference type="SAM" id="MobiDB-lite"/>
    </source>
</evidence>
<evidence type="ECO:0000305" key="5"/>
<organism>
    <name type="scientific">Cryptococcus neoformans var. neoformans serotype D (strain B-3501A)</name>
    <name type="common">Filobasidiella neoformans</name>
    <dbReference type="NCBI Taxonomy" id="283643"/>
    <lineage>
        <taxon>Eukaryota</taxon>
        <taxon>Fungi</taxon>
        <taxon>Dikarya</taxon>
        <taxon>Basidiomycota</taxon>
        <taxon>Agaricomycotina</taxon>
        <taxon>Tremellomycetes</taxon>
        <taxon>Tremellales</taxon>
        <taxon>Cryptococcaceae</taxon>
        <taxon>Cryptococcus</taxon>
        <taxon>Cryptococcus neoformans species complex</taxon>
    </lineage>
</organism>
<name>NTE1_CRYNB</name>
<sequence>MSSIPTPPDANGNPLIALAVAVIYAILYVLQGVKYGVSLLTIGIPSCIVRMLQYSLTISLGFPHLLALFAGALLALFFLIRYRYLTRYAQLKESALPPPSPPALASRLLPLDGDGLGLPDSRSQTSSFHNYLDDFLSAIRIFGYLEKPVFHELSRHLQTRRLAAGDTLEIGGGEFWCVVEGKVQVFAPDASSQGTPTPSSDTNSPTRPSFNGYHLLNEVSTGGTLSSLFSILSLFTEDIKLSWKSSADDEGEEEQIFEGAPEQSSAKLRVRRANSDVSQLGPDSIGVRAMDPTPLPESIDSHGDSSVPQRRRERSSSIDAAGETVREREGIFASASLPISSTEPPSPRRSQSLRSSPRLNSATNLLSSQSEHLRSSVPRKAGIEIGSKALKGTIARATEDTTLAVIPAAAFRKLTRKFPKASGTIVQVVLERFSRVTFMTAHKYLGLTREILQTESSLNLLVTHPLPRSFYTGGGMQALRARFQPEALAKESVHYDSLKSSPNARVSSKDYFNYVPASPTVKAPSLPAMTPKPLSPIIHKSSLGQTATTTVKNEPLNGGSSPLDETRDKVPSFGLSTAAATNPDASFRHASPFIRRTSAMRQQVAAGDLAMSVHNLPDESGQAYYRPTAITPGLSKMDTWQRRYSSSWNLNDSPHTDGQPVDPQRDDESLLNESFDLKEAVLNSIAKSIGLYQEAESNSDMIARSSMAPSVSALSTPNSPMFPPNAGTPLQGSTRSRPPHFGNVLDLINASSQNEGVIGGMLREAAFNSRPDDEASSISMSLHDSQGGASGVDRKIMKDLERHVEILFFKKGSVLVKEGERSPGMYYVIDGFLETSLPFRSTSSNQENPNSTPGSKHRQSSFGSSNERPFKTALGLDTSKGKELDDGSKKDEALFTVKPGGIAGYLSSLCCTDSYVDITAKTDCFVGFLPHHTLERIIERRPIVLLTLAKRLLSLLSPLVLHIDAALDWQQLNAGQVLYEKGDKSTDFYIVINGRLRAFTEKNDNMHVLREYGQNDSIGELDVITAVDRSETVHAIRDSELVRIPAALFDAISIKHPETTVQFMRLIAGRVRRALGDEMNGRVPGLPTTDMNLKTVCVLGSTRNVPVTQFAGKLKNALEEIGASTSYLDQGIVMRHLGRHAFARIGKLKVAGWLADQEQHYRTVLYVADSPPASQWTLTCIRQADLVLVVSMGDDPSLGEYEKLLLATKTTARKELILLHDERTVAPGSTRQWLSNRPWIQTHYHVELPGVVTPARPIPPVHDAAAIAAFKHLREQVETRIKKYRGLRPFTRPRRPPHMNDFARIARRLCGQQIGLVLGGGGARGISHIGMLQALEEFGIPIDAIGGCSIGSFVGGLYARETDLLETAGRTKQFSGRMGSMWRILSDVTYPFVSYTTGHEFNRGIYKAFYNTHIEDFWIPFFANSTNITHSRMEVHRTGYAWRYVRASMTLAGLLPPLSDNGNLLVDGGYMDNTPIQPLRENGIRDIIVVDVGSVDDTSPRDYGDSVSGWWIFFNRFNPFYERRVLSMTEISSRLTYVSSVKTLEGVKATPGCHYIAMPVQQFDTLGGFKRFSEVMEIGLKAGRETLKKWKEEGKLPTGLVDEAKGSKAVQRGNRLRRMSI</sequence>
<protein>
    <recommendedName>
        <fullName>Lysophospholipase NTE1</fullName>
        <ecNumber>3.1.1.5</ecNumber>
    </recommendedName>
    <alternativeName>
        <fullName>Intracellular phospholipase B</fullName>
    </alternativeName>
    <alternativeName>
        <fullName>Neuropathy target esterase homolog</fullName>
    </alternativeName>
</protein>
<accession>P0CP37</accession>
<accession>Q55U92</accession>
<accession>Q5KI53</accession>
<dbReference type="EC" id="3.1.1.5"/>
<dbReference type="EMBL" id="AAEY01000019">
    <property type="protein sequence ID" value="EAL21520.1"/>
    <property type="molecule type" value="Genomic_DNA"/>
</dbReference>
<dbReference type="RefSeq" id="XP_776167.1">
    <property type="nucleotide sequence ID" value="XM_771074.1"/>
</dbReference>
<dbReference type="SMR" id="P0CP37"/>
<dbReference type="EnsemblFungi" id="AAW42828">
    <property type="protein sequence ID" value="AAW42828"/>
    <property type="gene ID" value="CND04180"/>
</dbReference>
<dbReference type="GeneID" id="4935603"/>
<dbReference type="KEGG" id="cnb:CNBD2140"/>
<dbReference type="VEuPathDB" id="FungiDB:CNBD2140"/>
<dbReference type="HOGENOM" id="CLU_000960_1_1_1"/>
<dbReference type="OrthoDB" id="3985at5206"/>
<dbReference type="GO" id="GO:0005789">
    <property type="term" value="C:endoplasmic reticulum membrane"/>
    <property type="evidence" value="ECO:0007669"/>
    <property type="project" value="UniProtKB-SubCell"/>
</dbReference>
<dbReference type="GO" id="GO:0004622">
    <property type="term" value="F:lysophospholipase activity"/>
    <property type="evidence" value="ECO:0007669"/>
    <property type="project" value="UniProtKB-EC"/>
</dbReference>
<dbReference type="GO" id="GO:0016042">
    <property type="term" value="P:lipid catabolic process"/>
    <property type="evidence" value="ECO:0007669"/>
    <property type="project" value="UniProtKB-KW"/>
</dbReference>
<dbReference type="GO" id="GO:0046470">
    <property type="term" value="P:phosphatidylcholine metabolic process"/>
    <property type="evidence" value="ECO:0007669"/>
    <property type="project" value="InterPro"/>
</dbReference>
<dbReference type="CDD" id="cd00038">
    <property type="entry name" value="CAP_ED"/>
    <property type="match status" value="2"/>
</dbReference>
<dbReference type="CDD" id="cd07227">
    <property type="entry name" value="Pat_Fungal_NTE1"/>
    <property type="match status" value="1"/>
</dbReference>
<dbReference type="FunFam" id="2.60.120.10:FF:000062">
    <property type="entry name" value="Lysophospholipase NTE1"/>
    <property type="match status" value="1"/>
</dbReference>
<dbReference type="FunFam" id="3.40.1090.10:FF:000007">
    <property type="entry name" value="Lysophospholipase NTE1"/>
    <property type="match status" value="1"/>
</dbReference>
<dbReference type="Gene3D" id="3.40.1090.10">
    <property type="entry name" value="Cytosolic phospholipase A2 catalytic domain"/>
    <property type="match status" value="2"/>
</dbReference>
<dbReference type="Gene3D" id="2.60.120.10">
    <property type="entry name" value="Jelly Rolls"/>
    <property type="match status" value="2"/>
</dbReference>
<dbReference type="InterPro" id="IPR016035">
    <property type="entry name" value="Acyl_Trfase/lysoPLipase"/>
</dbReference>
<dbReference type="InterPro" id="IPR000595">
    <property type="entry name" value="cNMP-bd_dom"/>
</dbReference>
<dbReference type="InterPro" id="IPR018490">
    <property type="entry name" value="cNMP-bd_dom_sf"/>
</dbReference>
<dbReference type="InterPro" id="IPR001423">
    <property type="entry name" value="LysoPLipase_patatin_CS"/>
</dbReference>
<dbReference type="InterPro" id="IPR050301">
    <property type="entry name" value="NTE"/>
</dbReference>
<dbReference type="InterPro" id="IPR056556">
    <property type="entry name" value="NTE1_P-loop_dom"/>
</dbReference>
<dbReference type="InterPro" id="IPR002641">
    <property type="entry name" value="PNPLA_dom"/>
</dbReference>
<dbReference type="InterPro" id="IPR014710">
    <property type="entry name" value="RmlC-like_jellyroll"/>
</dbReference>
<dbReference type="PANTHER" id="PTHR14226:SF29">
    <property type="entry name" value="NEUROPATHY TARGET ESTERASE SWS"/>
    <property type="match status" value="1"/>
</dbReference>
<dbReference type="PANTHER" id="PTHR14226">
    <property type="entry name" value="NEUROPATHY TARGET ESTERASE/SWISS CHEESE D.MELANOGASTER"/>
    <property type="match status" value="1"/>
</dbReference>
<dbReference type="Pfam" id="PF00027">
    <property type="entry name" value="cNMP_binding"/>
    <property type="match status" value="1"/>
</dbReference>
<dbReference type="Pfam" id="PF24179">
    <property type="entry name" value="NTE_Ploop"/>
    <property type="match status" value="1"/>
</dbReference>
<dbReference type="Pfam" id="PF01734">
    <property type="entry name" value="Patatin"/>
    <property type="match status" value="1"/>
</dbReference>
<dbReference type="SMART" id="SM00100">
    <property type="entry name" value="cNMP"/>
    <property type="match status" value="2"/>
</dbReference>
<dbReference type="SUPFAM" id="SSF51206">
    <property type="entry name" value="cAMP-binding domain-like"/>
    <property type="match status" value="3"/>
</dbReference>
<dbReference type="SUPFAM" id="SSF52151">
    <property type="entry name" value="FabD/lysophospholipase-like"/>
    <property type="match status" value="1"/>
</dbReference>
<dbReference type="PROSITE" id="PS50042">
    <property type="entry name" value="CNMP_BINDING_3"/>
    <property type="match status" value="2"/>
</dbReference>
<dbReference type="PROSITE" id="PS51635">
    <property type="entry name" value="PNPLA"/>
    <property type="match status" value="1"/>
</dbReference>
<dbReference type="PROSITE" id="PS01237">
    <property type="entry name" value="UPF0028"/>
    <property type="match status" value="1"/>
</dbReference>
<feature type="chain" id="PRO_0000410176" description="Lysophospholipase NTE1">
    <location>
        <begin position="1"/>
        <end position="1621"/>
    </location>
</feature>
<feature type="topological domain" description="Cytoplasmic" evidence="1">
    <location>
        <begin position="1"/>
        <end position="12"/>
    </location>
</feature>
<feature type="transmembrane region" description="Helical" evidence="2">
    <location>
        <begin position="13"/>
        <end position="33"/>
    </location>
</feature>
<feature type="topological domain" description="Lumenal" evidence="1">
    <location>
        <begin position="34"/>
        <end position="59"/>
    </location>
</feature>
<feature type="transmembrane region" description="Helical" evidence="2">
    <location>
        <begin position="60"/>
        <end position="80"/>
    </location>
</feature>
<feature type="topological domain" description="Cytoplasmic" evidence="1">
    <location>
        <begin position="81"/>
        <end position="1621"/>
    </location>
</feature>
<feature type="domain" description="PNPLA" evidence="3">
    <location>
        <begin position="1316"/>
        <end position="1480"/>
    </location>
</feature>
<feature type="region of interest" description="Disordered" evidence="4">
    <location>
        <begin position="188"/>
        <end position="209"/>
    </location>
</feature>
<feature type="region of interest" description="Disordered" evidence="4">
    <location>
        <begin position="250"/>
        <end position="379"/>
    </location>
</feature>
<feature type="region of interest" description="Disordered" evidence="4">
    <location>
        <begin position="545"/>
        <end position="566"/>
    </location>
</feature>
<feature type="region of interest" description="Disordered" evidence="4">
    <location>
        <begin position="648"/>
        <end position="667"/>
    </location>
</feature>
<feature type="region of interest" description="Disordered" evidence="4">
    <location>
        <begin position="711"/>
        <end position="735"/>
    </location>
</feature>
<feature type="region of interest" description="Disordered" evidence="4">
    <location>
        <begin position="772"/>
        <end position="791"/>
    </location>
</feature>
<feature type="region of interest" description="Disordered" evidence="4">
    <location>
        <begin position="839"/>
        <end position="870"/>
    </location>
</feature>
<feature type="short sequence motif" description="GXGXXG" evidence="3">
    <location>
        <begin position="1320"/>
        <end position="1325"/>
    </location>
</feature>
<feature type="short sequence motif" description="GXSXG" evidence="3">
    <location>
        <begin position="1347"/>
        <end position="1351"/>
    </location>
</feature>
<feature type="short sequence motif" description="DGA/G" evidence="3">
    <location>
        <begin position="1467"/>
        <end position="1469"/>
    </location>
</feature>
<feature type="compositionally biased region" description="Low complexity" evidence="4">
    <location>
        <begin position="195"/>
        <end position="209"/>
    </location>
</feature>
<feature type="compositionally biased region" description="Low complexity" evidence="4">
    <location>
        <begin position="348"/>
        <end position="361"/>
    </location>
</feature>
<feature type="compositionally biased region" description="Polar residues" evidence="4">
    <location>
        <begin position="839"/>
        <end position="867"/>
    </location>
</feature>
<feature type="active site" description="Nucleophile" evidence="3">
    <location>
        <position position="1349"/>
    </location>
</feature>
<feature type="active site" description="Proton acceptor" evidence="3">
    <location>
        <position position="1467"/>
    </location>
</feature>
<feature type="binding site">
    <location>
        <begin position="788"/>
        <end position="907"/>
    </location>
    <ligand>
        <name>a nucleoside 3',5'-cyclic phosphate</name>
        <dbReference type="ChEBI" id="CHEBI:58464"/>
        <label>1</label>
    </ligand>
</feature>
<feature type="binding site">
    <location>
        <begin position="951"/>
        <end position="1070"/>
    </location>
    <ligand>
        <name>a nucleoside 3',5'-cyclic phosphate</name>
        <dbReference type="ChEBI" id="CHEBI:58464"/>
        <label>2</label>
    </ligand>
</feature>